<comment type="function">
    <text evidence="1">High affinity receptor for melatonin. The activity of this receptor is mediated by pertussis toxin sensitive G proteins that inhibits adenylate cyclase activity (By similarity).</text>
</comment>
<comment type="subcellular location">
    <subcellularLocation>
        <location>Cell membrane</location>
        <topology>Multi-pass membrane protein</topology>
    </subcellularLocation>
</comment>
<comment type="induction">
    <text evidence="4">By cocaine, which increases the levels of day-time expression.</text>
</comment>
<comment type="similarity">
    <text evidence="3">Belongs to the G-protein coupled receptor 1 family.</text>
</comment>
<protein>
    <recommendedName>
        <fullName>Melatonin receptor type 1A-A</fullName>
        <shortName>Mel-1A-R-A</shortName>
        <shortName>Mel1a receptor A</shortName>
    </recommendedName>
    <alternativeName>
        <fullName>Melatonin receptor Mel1a Z1.7-4</fullName>
    </alternativeName>
    <alternativeName>
        <fullName>zMel1a1</fullName>
    </alternativeName>
</protein>
<gene>
    <name type="primary">mtnr1aa</name>
    <name type="synonym">mel1ar</name>
    <name type="synonym">mtnr1ar</name>
    <name type="ORF">zgc:110628</name>
</gene>
<keyword id="KW-0090">Biological rhythms</keyword>
<keyword id="KW-1003">Cell membrane</keyword>
<keyword id="KW-1015">Disulfide bond</keyword>
<keyword id="KW-0297">G-protein coupled receptor</keyword>
<keyword id="KW-0325">Glycoprotein</keyword>
<keyword id="KW-0472">Membrane</keyword>
<keyword id="KW-0675">Receptor</keyword>
<keyword id="KW-1185">Reference proteome</keyword>
<keyword id="KW-0807">Transducer</keyword>
<keyword id="KW-0812">Transmembrane</keyword>
<keyword id="KW-1133">Transmembrane helix</keyword>
<reference key="1">
    <citation type="submission" date="2005-04" db="EMBL/GenBank/DDBJ databases">
        <authorList>
            <consortium name="NIH - Zebrafish Gene Collection (ZGC) project"/>
        </authorList>
    </citation>
    <scope>NUCLEOTIDE SEQUENCE [LARGE SCALE MRNA]</scope>
    <source>
        <tissue>Embryo</tissue>
    </source>
</reference>
<reference key="2">
    <citation type="submission" date="2002-10" db="EMBL/GenBank/DDBJ databases">
        <title>Zebrafish melatonin receptors.</title>
        <authorList>
            <person name="Danilova N.P."/>
        </authorList>
    </citation>
    <scope>NUCLEOTIDE SEQUENCE [MRNA] OF 1-270</scope>
</reference>
<reference key="3">
    <citation type="journal article" date="1995" name="Neuron">
        <title>Melatonin receptors are for the birds: molecular analysis of two receptor subtypes differentially expressed in chick brain.</title>
        <authorList>
            <person name="Reppert S.M."/>
            <person name="Weaver D.R."/>
            <person name="Cassone V.M."/>
            <person name="Godson C."/>
            <person name="Kolakowski L.F. Jr."/>
        </authorList>
    </citation>
    <scope>NUCLEOTIDE SEQUENCE [MRNA] OF 130-282</scope>
</reference>
<reference key="4">
    <citation type="journal article" date="2007" name="PLoS ONE">
        <title>The circadian system is a target and modulator of prenatal cocaine effects.</title>
        <authorList>
            <person name="Shang E.H."/>
            <person name="Zhdanova I.V."/>
        </authorList>
    </citation>
    <scope>INDUCTION</scope>
</reference>
<sequence length="350" mass="39661">MFMNGSSLNSSALDPSEQALQRPPWVTTTLGCFLIFTIVVDILGNLLVIFSVYRNKKLQNAGNIFVVSLAVADLVVAIYPYPLVLTSIFHRGWNLGYMHCQISGFLMGVSVIGSIFNITGIAINCYCYICHSLKYDKLYSDKNSVCYVLLIWALTVLAIVPNLFVGSLQYDPRVYSCTFEQSASSAYTIAVVFFHFILPIMIVTYCYLRIWVLVIQVRRRVKNDNRPKITPHDVRNFVTMFVVFVLFAVCWAPLNFIGLAVAISPERVVPLIPEWLFVASYFMAYFNSCLNAIVYGVLNQNFRREYKRIVVSVCTARIFFGESSNEAQERLKSKPSPLMTNNNQVKVDSV</sequence>
<dbReference type="EMBL" id="BC092957">
    <property type="protein sequence ID" value="AAH92957.1"/>
    <property type="molecule type" value="mRNA"/>
</dbReference>
<dbReference type="EMBL" id="AY166824">
    <property type="protein sequence ID" value="AAO23295.1"/>
    <property type="molecule type" value="mRNA"/>
</dbReference>
<dbReference type="EMBL" id="U31822">
    <property type="protein sequence ID" value="AAA92494.1"/>
    <property type="molecule type" value="mRNA"/>
</dbReference>
<dbReference type="RefSeq" id="NP_571468.1">
    <property type="nucleotide sequence ID" value="NM_131393.1"/>
</dbReference>
<dbReference type="SMR" id="P51046"/>
<dbReference type="FunCoup" id="P51046">
    <property type="interactions" value="780"/>
</dbReference>
<dbReference type="STRING" id="7955.ENSDARP00000054673"/>
<dbReference type="GlyCosmos" id="P51046">
    <property type="glycosylation" value="2 sites, No reported glycans"/>
</dbReference>
<dbReference type="PaxDb" id="7955-ENSDARP00000054673"/>
<dbReference type="GeneID" id="30667"/>
<dbReference type="KEGG" id="dre:30667"/>
<dbReference type="AGR" id="ZFIN:ZDB-GENE-990415-155"/>
<dbReference type="CTD" id="30667"/>
<dbReference type="ZFIN" id="ZDB-GENE-990415-155">
    <property type="gene designation" value="mtnr1aa"/>
</dbReference>
<dbReference type="eggNOG" id="KOG3656">
    <property type="taxonomic scope" value="Eukaryota"/>
</dbReference>
<dbReference type="InParanoid" id="P51046"/>
<dbReference type="OrthoDB" id="10044919at2759"/>
<dbReference type="PhylomeDB" id="P51046"/>
<dbReference type="Reactome" id="R-DRE-373076">
    <property type="pathway name" value="Class A/1 (Rhodopsin-like receptors)"/>
</dbReference>
<dbReference type="Reactome" id="R-DRE-418594">
    <property type="pathway name" value="G alpha (i) signalling events"/>
</dbReference>
<dbReference type="PRO" id="PR:P51046"/>
<dbReference type="Proteomes" id="UP000000437">
    <property type="component" value="Alternate scaffold 1"/>
</dbReference>
<dbReference type="Proteomes" id="UP000000437">
    <property type="component" value="Chromosome 1"/>
</dbReference>
<dbReference type="GO" id="GO:0005886">
    <property type="term" value="C:plasma membrane"/>
    <property type="evidence" value="ECO:0000318"/>
    <property type="project" value="GO_Central"/>
</dbReference>
<dbReference type="GO" id="GO:0004930">
    <property type="term" value="F:G protein-coupled receptor activity"/>
    <property type="evidence" value="ECO:0000318"/>
    <property type="project" value="GO_Central"/>
</dbReference>
<dbReference type="GO" id="GO:0008502">
    <property type="term" value="F:melatonin receptor activity"/>
    <property type="evidence" value="ECO:0007669"/>
    <property type="project" value="InterPro"/>
</dbReference>
<dbReference type="GO" id="GO:0007186">
    <property type="term" value="P:G protein-coupled receptor signaling pathway"/>
    <property type="evidence" value="ECO:0000318"/>
    <property type="project" value="GO_Central"/>
</dbReference>
<dbReference type="GO" id="GO:0048511">
    <property type="term" value="P:rhythmic process"/>
    <property type="evidence" value="ECO:0007669"/>
    <property type="project" value="UniProtKB-KW"/>
</dbReference>
<dbReference type="CDD" id="cd15402">
    <property type="entry name" value="7tmA_Mel1A"/>
    <property type="match status" value="1"/>
</dbReference>
<dbReference type="FunFam" id="1.20.1070.10:FF:000056">
    <property type="entry name" value="Melatonin receptor type 1A"/>
    <property type="match status" value="1"/>
</dbReference>
<dbReference type="Gene3D" id="1.20.1070.10">
    <property type="entry name" value="Rhodopsin 7-helix transmembrane proteins"/>
    <property type="match status" value="1"/>
</dbReference>
<dbReference type="InterPro" id="IPR000276">
    <property type="entry name" value="GPCR_Rhodpsn"/>
</dbReference>
<dbReference type="InterPro" id="IPR017452">
    <property type="entry name" value="GPCR_Rhodpsn_7TM"/>
</dbReference>
<dbReference type="InterPro" id="IPR002278">
    <property type="entry name" value="Mel_1A/1B_rcpt"/>
</dbReference>
<dbReference type="InterPro" id="IPR000025">
    <property type="entry name" value="Melatonin_rcpt"/>
</dbReference>
<dbReference type="PANTHER" id="PTHR24228">
    <property type="entry name" value="B2 BRADYKININ RECEPTOR/ANGIOTENSIN II RECEPTOR"/>
    <property type="match status" value="1"/>
</dbReference>
<dbReference type="PANTHER" id="PTHR24228:SF53">
    <property type="entry name" value="MELATONIN RECEPTOR TYPE 1A"/>
    <property type="match status" value="1"/>
</dbReference>
<dbReference type="Pfam" id="PF00001">
    <property type="entry name" value="7tm_1"/>
    <property type="match status" value="1"/>
</dbReference>
<dbReference type="PRINTS" id="PR00237">
    <property type="entry name" value="GPCRRHODOPSN"/>
</dbReference>
<dbReference type="PRINTS" id="PR01149">
    <property type="entry name" value="MELATONIN1AR"/>
</dbReference>
<dbReference type="PRINTS" id="PR00857">
    <property type="entry name" value="MELATONINR"/>
</dbReference>
<dbReference type="SMART" id="SM01381">
    <property type="entry name" value="7TM_GPCR_Srsx"/>
    <property type="match status" value="1"/>
</dbReference>
<dbReference type="SUPFAM" id="SSF81321">
    <property type="entry name" value="Family A G protein-coupled receptor-like"/>
    <property type="match status" value="1"/>
</dbReference>
<dbReference type="PROSITE" id="PS50262">
    <property type="entry name" value="G_PROTEIN_RECEP_F1_2"/>
    <property type="match status" value="1"/>
</dbReference>
<organism>
    <name type="scientific">Danio rerio</name>
    <name type="common">Zebrafish</name>
    <name type="synonym">Brachydanio rerio</name>
    <dbReference type="NCBI Taxonomy" id="7955"/>
    <lineage>
        <taxon>Eukaryota</taxon>
        <taxon>Metazoa</taxon>
        <taxon>Chordata</taxon>
        <taxon>Craniata</taxon>
        <taxon>Vertebrata</taxon>
        <taxon>Euteleostomi</taxon>
        <taxon>Actinopterygii</taxon>
        <taxon>Neopterygii</taxon>
        <taxon>Teleostei</taxon>
        <taxon>Ostariophysi</taxon>
        <taxon>Cypriniformes</taxon>
        <taxon>Danionidae</taxon>
        <taxon>Danioninae</taxon>
        <taxon>Danio</taxon>
    </lineage>
</organism>
<evidence type="ECO:0000250" key="1"/>
<evidence type="ECO:0000255" key="2"/>
<evidence type="ECO:0000255" key="3">
    <source>
        <dbReference type="PROSITE-ProRule" id="PRU00521"/>
    </source>
</evidence>
<evidence type="ECO:0000269" key="4">
    <source>
    </source>
</evidence>
<evidence type="ECO:0000305" key="5"/>
<feature type="chain" id="PRO_0000069743" description="Melatonin receptor type 1A-A">
    <location>
        <begin position="1"/>
        <end position="350"/>
    </location>
</feature>
<feature type="topological domain" description="Extracellular" evidence="2">
    <location>
        <begin position="1"/>
        <end position="29"/>
    </location>
</feature>
<feature type="transmembrane region" description="Helical; Name=1" evidence="2">
    <location>
        <begin position="30"/>
        <end position="50"/>
    </location>
</feature>
<feature type="topological domain" description="Cytoplasmic" evidence="2">
    <location>
        <begin position="51"/>
        <end position="63"/>
    </location>
</feature>
<feature type="transmembrane region" description="Helical; Name=2" evidence="2">
    <location>
        <begin position="64"/>
        <end position="84"/>
    </location>
</feature>
<feature type="topological domain" description="Extracellular" evidence="2">
    <location>
        <begin position="85"/>
        <end position="101"/>
    </location>
</feature>
<feature type="transmembrane region" description="Helical; Name=3" evidence="2">
    <location>
        <begin position="102"/>
        <end position="122"/>
    </location>
</feature>
<feature type="topological domain" description="Cytoplasmic" evidence="2">
    <location>
        <begin position="123"/>
        <end position="144"/>
    </location>
</feature>
<feature type="transmembrane region" description="Helical; Name=4" evidence="2">
    <location>
        <begin position="145"/>
        <end position="165"/>
    </location>
</feature>
<feature type="topological domain" description="Extracellular" evidence="2">
    <location>
        <begin position="166"/>
        <end position="187"/>
    </location>
</feature>
<feature type="transmembrane region" description="Helical; Name=5" evidence="2">
    <location>
        <begin position="188"/>
        <end position="208"/>
    </location>
</feature>
<feature type="topological domain" description="Cytoplasmic" evidence="2">
    <location>
        <begin position="209"/>
        <end position="240"/>
    </location>
</feature>
<feature type="transmembrane region" description="Helical; Name=6" evidence="2">
    <location>
        <begin position="241"/>
        <end position="261"/>
    </location>
</feature>
<feature type="topological domain" description="Extracellular" evidence="2">
    <location>
        <begin position="262"/>
        <end position="267"/>
    </location>
</feature>
<feature type="transmembrane region" description="Helical; Name=7" evidence="2">
    <location>
        <begin position="268"/>
        <end position="288"/>
    </location>
</feature>
<feature type="topological domain" description="Cytoplasmic" evidence="2">
    <location>
        <begin position="289"/>
        <end position="350"/>
    </location>
</feature>
<feature type="glycosylation site" description="N-linked (GlcNAc...) asparagine" evidence="2">
    <location>
        <position position="4"/>
    </location>
</feature>
<feature type="glycosylation site" description="N-linked (GlcNAc...) asparagine" evidence="2">
    <location>
        <position position="9"/>
    </location>
</feature>
<feature type="disulfide bond" evidence="3">
    <location>
        <begin position="100"/>
        <end position="177"/>
    </location>
</feature>
<feature type="sequence conflict" description="In Ref. 2; AAO23295." evidence="5" ref="2">
    <original>Q</original>
    <variation>R</variation>
    <location>
        <position position="59"/>
    </location>
</feature>
<feature type="sequence conflict" description="In Ref. 2; AAO23295." evidence="5" ref="2">
    <original>S</original>
    <variation>G</variation>
    <location>
        <position position="103"/>
    </location>
</feature>
<feature type="sequence conflict" description="In Ref. 2; AAO23295." evidence="5" ref="2">
    <original>C</original>
    <variation>R</variation>
    <location>
        <position position="125"/>
    </location>
</feature>
<feature type="sequence conflict" description="In Ref. 1; AAH92957." evidence="5" ref="1">
    <original>N</original>
    <variation>P</variation>
    <location>
        <position position="223"/>
    </location>
</feature>
<proteinExistence type="evidence at transcript level"/>
<name>MR1AA_DANRE</name>
<accession>P51046</accession>
<accession>Q567Z2</accession>
<accession>Q804J0</accession>